<feature type="signal peptide" evidence="2 3">
    <location>
        <begin position="1"/>
        <end position="34"/>
    </location>
</feature>
<feature type="chain" id="PRO_0000005088" description="Platelet basic protein">
    <location>
        <begin position="35"/>
        <end position="128"/>
    </location>
</feature>
<feature type="chain" id="PRO_0000005089" description="Connective tissue-activating peptide III">
    <location>
        <begin position="44"/>
        <end position="128"/>
    </location>
</feature>
<feature type="chain" id="PRO_0000005090" description="TC-2">
    <location>
        <begin position="44"/>
        <end position="126"/>
    </location>
</feature>
<feature type="chain" id="PRO_0000041949" description="Connective tissue-activating peptide III(1-81)">
    <location>
        <begin position="44"/>
        <end position="124"/>
    </location>
</feature>
<feature type="chain" id="PRO_0000005091" description="Beta-thromboglobulin">
    <location>
        <begin position="48"/>
        <end position="128"/>
    </location>
</feature>
<feature type="chain" id="PRO_0000005092" description="Neutrophil-activating peptide 2(74)">
    <location>
        <begin position="55"/>
        <end position="128"/>
    </location>
</feature>
<feature type="chain" id="PRO_0000005093" description="Neutrophil-activating peptide 2(73)">
    <location>
        <begin position="56"/>
        <end position="128"/>
    </location>
</feature>
<feature type="chain" id="PRO_0000005094" description="Neutrophil-activating peptide 2">
    <location>
        <begin position="59"/>
        <end position="128"/>
    </location>
</feature>
<feature type="chain" id="PRO_0000005095" description="TC-1">
    <location>
        <begin position="59"/>
        <end position="126"/>
    </location>
</feature>
<feature type="chain" id="PRO_0000005096" description="Neutrophil-activating peptide 2(1-66)">
    <location>
        <begin position="59"/>
        <end position="124"/>
    </location>
</feature>
<feature type="chain" id="PRO_0000041950" description="Neutrophil-activating peptide 2(1-63)">
    <location>
        <begin position="59"/>
        <end position="121"/>
    </location>
</feature>
<feature type="disulfide bond">
    <location>
        <begin position="63"/>
        <end position="89"/>
    </location>
</feature>
<feature type="disulfide bond">
    <location>
        <begin position="65"/>
        <end position="105"/>
    </location>
</feature>
<feature type="strand" evidence="8">
    <location>
        <begin position="50"/>
        <end position="54"/>
    </location>
</feature>
<feature type="helix" evidence="8">
    <location>
        <begin position="58"/>
        <end position="60"/>
    </location>
</feature>
<feature type="helix" evidence="10">
    <location>
        <begin position="74"/>
        <end position="76"/>
    </location>
</feature>
<feature type="strand" evidence="10">
    <location>
        <begin position="77"/>
        <end position="83"/>
    </location>
</feature>
<feature type="strand" evidence="9">
    <location>
        <begin position="89"/>
        <end position="91"/>
    </location>
</feature>
<feature type="strand" evidence="10">
    <location>
        <begin position="93"/>
        <end position="98"/>
    </location>
</feature>
<feature type="strand" evidence="10">
    <location>
        <begin position="103"/>
        <end position="106"/>
    </location>
</feature>
<feature type="helix" evidence="10">
    <location>
        <begin position="111"/>
        <end position="122"/>
    </location>
</feature>
<name>CXCL7_HUMAN</name>
<sequence>MSLRLDTTPSCNSARPLHALQVLLLLSLLLTALASSTKGQTKRNLAKGKEESLDSDLYAELRCMCIKTTSGIHPKNIQSLEVIGKGTHCNQVEVIATLKDGRKICLDPDAPRIKKIVQKKLAGDESAD</sequence>
<keyword id="KW-0002">3D-structure</keyword>
<keyword id="KW-0044">Antibiotic</keyword>
<keyword id="KW-0929">Antimicrobial</keyword>
<keyword id="KW-0145">Chemotaxis</keyword>
<keyword id="KW-0165">Cleavage on pair of basic residues</keyword>
<keyword id="KW-0202">Cytokine</keyword>
<keyword id="KW-0903">Direct protein sequencing</keyword>
<keyword id="KW-1015">Disulfide bond</keyword>
<keyword id="KW-0339">Growth factor</keyword>
<keyword id="KW-0497">Mitogen</keyword>
<keyword id="KW-1267">Proteomics identification</keyword>
<keyword id="KW-1185">Reference proteome</keyword>
<keyword id="KW-0964">Secreted</keyword>
<keyword id="KW-0732">Signal</keyword>
<organism>
    <name type="scientific">Homo sapiens</name>
    <name type="common">Human</name>
    <dbReference type="NCBI Taxonomy" id="9606"/>
    <lineage>
        <taxon>Eukaryota</taxon>
        <taxon>Metazoa</taxon>
        <taxon>Chordata</taxon>
        <taxon>Craniata</taxon>
        <taxon>Vertebrata</taxon>
        <taxon>Euteleostomi</taxon>
        <taxon>Mammalia</taxon>
        <taxon>Eutheria</taxon>
        <taxon>Euarchontoglires</taxon>
        <taxon>Primates</taxon>
        <taxon>Haplorrhini</taxon>
        <taxon>Catarrhini</taxon>
        <taxon>Hominidae</taxon>
        <taxon>Homo</taxon>
    </lineage>
</organism>
<evidence type="ECO:0000269" key="1">
    <source>
    </source>
</evidence>
<evidence type="ECO:0000269" key="2">
    <source>
    </source>
</evidence>
<evidence type="ECO:0000269" key="3">
    <source>
    </source>
</evidence>
<evidence type="ECO:0000269" key="4">
    <source>
    </source>
</evidence>
<evidence type="ECO:0000269" key="5">
    <source>
    </source>
</evidence>
<evidence type="ECO:0000269" key="6">
    <source>
    </source>
</evidence>
<evidence type="ECO:0000305" key="7"/>
<evidence type="ECO:0007829" key="8">
    <source>
        <dbReference type="PDB" id="1F9P"/>
    </source>
</evidence>
<evidence type="ECO:0007829" key="9">
    <source>
        <dbReference type="PDB" id="1NAP"/>
    </source>
</evidence>
<evidence type="ECO:0007829" key="10">
    <source>
        <dbReference type="PDB" id="1TVX"/>
    </source>
</evidence>
<proteinExistence type="evidence at protein level"/>
<gene>
    <name type="primary">PPBP</name>
    <name type="synonym">CTAP3</name>
    <name type="synonym">CXCL7</name>
    <name type="synonym">SCYB7</name>
    <name type="synonym">TGB1</name>
    <name type="synonym">THBGB1</name>
</gene>
<accession>P02775</accession>
<accession>B2R5F3</accession>
<accession>Q6IBJ8</accession>
<reference key="1">
    <citation type="journal article" date="1989" name="Blood">
        <title>Cloning of cDNA coding for connective tissue activating peptide III from a human platelet-derived lambda gt11 expression library.</title>
        <authorList>
            <person name="Wenger R.H."/>
            <person name="Wicki A.N."/>
            <person name="Walz A."/>
            <person name="Kieffer N."/>
            <person name="Clemetson K.J."/>
        </authorList>
    </citation>
    <scope>NUCLEOTIDE SEQUENCE [MRNA]</scope>
    <source>
        <tissue>Platelet</tissue>
    </source>
</reference>
<reference key="2">
    <citation type="journal article" date="1991" name="J. Biol. Chem.">
        <title>Characterization of the human beta-thromboglobulin gene. Comparison with the gene for platelet factor 4.</title>
        <authorList>
            <person name="Majumdar S."/>
            <person name="Gonder D."/>
            <person name="Koutsis B."/>
            <person name="Poncz M."/>
        </authorList>
    </citation>
    <scope>NUCLEOTIDE SEQUENCE [GENOMIC DNA]</scope>
</reference>
<reference key="3">
    <citation type="journal article" date="2001" name="Blood">
        <title>Localization of distal regulatory domains in the megakaryocyte-specific platelet basic protein/platelet factor 4 gene locus.</title>
        <authorList>
            <person name="Zhang C."/>
            <person name="Thornton M.A."/>
            <person name="Kowalska M.A."/>
            <person name="Sachis B.S."/>
            <person name="Feldman M."/>
            <person name="Poncz M."/>
            <person name="McKenzie S.E."/>
            <person name="Reilly M.P."/>
        </authorList>
    </citation>
    <scope>NUCLEOTIDE SEQUENCE [GENOMIC DNA]</scope>
</reference>
<reference key="4">
    <citation type="submission" date="2004-06" db="EMBL/GenBank/DDBJ databases">
        <title>Cloning of human full open reading frames in Gateway(TM) system entry vector (pDONR201).</title>
        <authorList>
            <person name="Ebert L."/>
            <person name="Schick M."/>
            <person name="Neubert P."/>
            <person name="Schatten R."/>
            <person name="Henze S."/>
            <person name="Korn B."/>
        </authorList>
    </citation>
    <scope>NUCLEOTIDE SEQUENCE [LARGE SCALE MRNA]</scope>
</reference>
<reference key="5">
    <citation type="journal article" date="2004" name="Nat. Genet.">
        <title>Complete sequencing and characterization of 21,243 full-length human cDNAs.</title>
        <authorList>
            <person name="Ota T."/>
            <person name="Suzuki Y."/>
            <person name="Nishikawa T."/>
            <person name="Otsuki T."/>
            <person name="Sugiyama T."/>
            <person name="Irie R."/>
            <person name="Wakamatsu A."/>
            <person name="Hayashi K."/>
            <person name="Sato H."/>
            <person name="Nagai K."/>
            <person name="Kimura K."/>
            <person name="Makita H."/>
            <person name="Sekine M."/>
            <person name="Obayashi M."/>
            <person name="Nishi T."/>
            <person name="Shibahara T."/>
            <person name="Tanaka T."/>
            <person name="Ishii S."/>
            <person name="Yamamoto J."/>
            <person name="Saito K."/>
            <person name="Kawai Y."/>
            <person name="Isono Y."/>
            <person name="Nakamura Y."/>
            <person name="Nagahari K."/>
            <person name="Murakami K."/>
            <person name="Yasuda T."/>
            <person name="Iwayanagi T."/>
            <person name="Wagatsuma M."/>
            <person name="Shiratori A."/>
            <person name="Sudo H."/>
            <person name="Hosoiri T."/>
            <person name="Kaku Y."/>
            <person name="Kodaira H."/>
            <person name="Kondo H."/>
            <person name="Sugawara M."/>
            <person name="Takahashi M."/>
            <person name="Kanda K."/>
            <person name="Yokoi T."/>
            <person name="Furuya T."/>
            <person name="Kikkawa E."/>
            <person name="Omura Y."/>
            <person name="Abe K."/>
            <person name="Kamihara K."/>
            <person name="Katsuta N."/>
            <person name="Sato K."/>
            <person name="Tanikawa M."/>
            <person name="Yamazaki M."/>
            <person name="Ninomiya K."/>
            <person name="Ishibashi T."/>
            <person name="Yamashita H."/>
            <person name="Murakawa K."/>
            <person name="Fujimori K."/>
            <person name="Tanai H."/>
            <person name="Kimata M."/>
            <person name="Watanabe M."/>
            <person name="Hiraoka S."/>
            <person name="Chiba Y."/>
            <person name="Ishida S."/>
            <person name="Ono Y."/>
            <person name="Takiguchi S."/>
            <person name="Watanabe S."/>
            <person name="Yosida M."/>
            <person name="Hotuta T."/>
            <person name="Kusano J."/>
            <person name="Kanehori K."/>
            <person name="Takahashi-Fujii A."/>
            <person name="Hara H."/>
            <person name="Tanase T.-O."/>
            <person name="Nomura Y."/>
            <person name="Togiya S."/>
            <person name="Komai F."/>
            <person name="Hara R."/>
            <person name="Takeuchi K."/>
            <person name="Arita M."/>
            <person name="Imose N."/>
            <person name="Musashino K."/>
            <person name="Yuuki H."/>
            <person name="Oshima A."/>
            <person name="Sasaki N."/>
            <person name="Aotsuka S."/>
            <person name="Yoshikawa Y."/>
            <person name="Matsunawa H."/>
            <person name="Ichihara T."/>
            <person name="Shiohata N."/>
            <person name="Sano S."/>
            <person name="Moriya S."/>
            <person name="Momiyama H."/>
            <person name="Satoh N."/>
            <person name="Takami S."/>
            <person name="Terashima Y."/>
            <person name="Suzuki O."/>
            <person name="Nakagawa S."/>
            <person name="Senoh A."/>
            <person name="Mizoguchi H."/>
            <person name="Goto Y."/>
            <person name="Shimizu F."/>
            <person name="Wakebe H."/>
            <person name="Hishigaki H."/>
            <person name="Watanabe T."/>
            <person name="Sugiyama A."/>
            <person name="Takemoto M."/>
            <person name="Kawakami B."/>
            <person name="Yamazaki M."/>
            <person name="Watanabe K."/>
            <person name="Kumagai A."/>
            <person name="Itakura S."/>
            <person name="Fukuzumi Y."/>
            <person name="Fujimori Y."/>
            <person name="Komiyama M."/>
            <person name="Tashiro H."/>
            <person name="Tanigami A."/>
            <person name="Fujiwara T."/>
            <person name="Ono T."/>
            <person name="Yamada K."/>
            <person name="Fujii Y."/>
            <person name="Ozaki K."/>
            <person name="Hirao M."/>
            <person name="Ohmori Y."/>
            <person name="Kawabata A."/>
            <person name="Hikiji T."/>
            <person name="Kobatake N."/>
            <person name="Inagaki H."/>
            <person name="Ikema Y."/>
            <person name="Okamoto S."/>
            <person name="Okitani R."/>
            <person name="Kawakami T."/>
            <person name="Noguchi S."/>
            <person name="Itoh T."/>
            <person name="Shigeta K."/>
            <person name="Senba T."/>
            <person name="Matsumura K."/>
            <person name="Nakajima Y."/>
            <person name="Mizuno T."/>
            <person name="Morinaga M."/>
            <person name="Sasaki M."/>
            <person name="Togashi T."/>
            <person name="Oyama M."/>
            <person name="Hata H."/>
            <person name="Watanabe M."/>
            <person name="Komatsu T."/>
            <person name="Mizushima-Sugano J."/>
            <person name="Satoh T."/>
            <person name="Shirai Y."/>
            <person name="Takahashi Y."/>
            <person name="Nakagawa K."/>
            <person name="Okumura K."/>
            <person name="Nagase T."/>
            <person name="Nomura N."/>
            <person name="Kikuchi H."/>
            <person name="Masuho Y."/>
            <person name="Yamashita R."/>
            <person name="Nakai K."/>
            <person name="Yada T."/>
            <person name="Nakamura Y."/>
            <person name="Ohara O."/>
            <person name="Isogai T."/>
            <person name="Sugano S."/>
        </authorList>
    </citation>
    <scope>NUCLEOTIDE SEQUENCE [LARGE SCALE MRNA]</scope>
    <source>
        <tissue>Umbilical cord blood</tissue>
    </source>
</reference>
<reference key="6">
    <citation type="journal article" date="2005" name="Nature">
        <title>Generation and annotation of the DNA sequences of human chromosomes 2 and 4.</title>
        <authorList>
            <person name="Hillier L.W."/>
            <person name="Graves T.A."/>
            <person name="Fulton R.S."/>
            <person name="Fulton L.A."/>
            <person name="Pepin K.H."/>
            <person name="Minx P."/>
            <person name="Wagner-McPherson C."/>
            <person name="Layman D."/>
            <person name="Wylie K."/>
            <person name="Sekhon M."/>
            <person name="Becker M.C."/>
            <person name="Fewell G.A."/>
            <person name="Delehaunty K.D."/>
            <person name="Miner T.L."/>
            <person name="Nash W.E."/>
            <person name="Kremitzki C."/>
            <person name="Oddy L."/>
            <person name="Du H."/>
            <person name="Sun H."/>
            <person name="Bradshaw-Cordum H."/>
            <person name="Ali J."/>
            <person name="Carter J."/>
            <person name="Cordes M."/>
            <person name="Harris A."/>
            <person name="Isak A."/>
            <person name="van Brunt A."/>
            <person name="Nguyen C."/>
            <person name="Du F."/>
            <person name="Courtney L."/>
            <person name="Kalicki J."/>
            <person name="Ozersky P."/>
            <person name="Abbott S."/>
            <person name="Armstrong J."/>
            <person name="Belter E.A."/>
            <person name="Caruso L."/>
            <person name="Cedroni M."/>
            <person name="Cotton M."/>
            <person name="Davidson T."/>
            <person name="Desai A."/>
            <person name="Elliott G."/>
            <person name="Erb T."/>
            <person name="Fronick C."/>
            <person name="Gaige T."/>
            <person name="Haakenson W."/>
            <person name="Haglund K."/>
            <person name="Holmes A."/>
            <person name="Harkins R."/>
            <person name="Kim K."/>
            <person name="Kruchowski S.S."/>
            <person name="Strong C.M."/>
            <person name="Grewal N."/>
            <person name="Goyea E."/>
            <person name="Hou S."/>
            <person name="Levy A."/>
            <person name="Martinka S."/>
            <person name="Mead K."/>
            <person name="McLellan M.D."/>
            <person name="Meyer R."/>
            <person name="Randall-Maher J."/>
            <person name="Tomlinson C."/>
            <person name="Dauphin-Kohlberg S."/>
            <person name="Kozlowicz-Reilly A."/>
            <person name="Shah N."/>
            <person name="Swearengen-Shahid S."/>
            <person name="Snider J."/>
            <person name="Strong J.T."/>
            <person name="Thompson J."/>
            <person name="Yoakum M."/>
            <person name="Leonard S."/>
            <person name="Pearman C."/>
            <person name="Trani L."/>
            <person name="Radionenko M."/>
            <person name="Waligorski J.E."/>
            <person name="Wang C."/>
            <person name="Rock S.M."/>
            <person name="Tin-Wollam A.-M."/>
            <person name="Maupin R."/>
            <person name="Latreille P."/>
            <person name="Wendl M.C."/>
            <person name="Yang S.-P."/>
            <person name="Pohl C."/>
            <person name="Wallis J.W."/>
            <person name="Spieth J."/>
            <person name="Bieri T.A."/>
            <person name="Berkowicz N."/>
            <person name="Nelson J.O."/>
            <person name="Osborne J."/>
            <person name="Ding L."/>
            <person name="Meyer R."/>
            <person name="Sabo A."/>
            <person name="Shotland Y."/>
            <person name="Sinha P."/>
            <person name="Wohldmann P.E."/>
            <person name="Cook L.L."/>
            <person name="Hickenbotham M.T."/>
            <person name="Eldred J."/>
            <person name="Williams D."/>
            <person name="Jones T.A."/>
            <person name="She X."/>
            <person name="Ciccarelli F.D."/>
            <person name="Izaurralde E."/>
            <person name="Taylor J."/>
            <person name="Schmutz J."/>
            <person name="Myers R.M."/>
            <person name="Cox D.R."/>
            <person name="Huang X."/>
            <person name="McPherson J.D."/>
            <person name="Mardis E.R."/>
            <person name="Clifton S.W."/>
            <person name="Warren W.C."/>
            <person name="Chinwalla A.T."/>
            <person name="Eddy S.R."/>
            <person name="Marra M.A."/>
            <person name="Ovcharenko I."/>
            <person name="Furey T.S."/>
            <person name="Miller W."/>
            <person name="Eichler E.E."/>
            <person name="Bork P."/>
            <person name="Suyama M."/>
            <person name="Torrents D."/>
            <person name="Waterston R.H."/>
            <person name="Wilson R.K."/>
        </authorList>
    </citation>
    <scope>NUCLEOTIDE SEQUENCE [LARGE SCALE GENOMIC DNA]</scope>
</reference>
<reference key="7">
    <citation type="submission" date="2005-07" db="EMBL/GenBank/DDBJ databases">
        <authorList>
            <person name="Mural R.J."/>
            <person name="Istrail S."/>
            <person name="Sutton G.G."/>
            <person name="Florea L."/>
            <person name="Halpern A.L."/>
            <person name="Mobarry C.M."/>
            <person name="Lippert R."/>
            <person name="Walenz B."/>
            <person name="Shatkay H."/>
            <person name="Dew I."/>
            <person name="Miller J.R."/>
            <person name="Flanigan M.J."/>
            <person name="Edwards N.J."/>
            <person name="Bolanos R."/>
            <person name="Fasulo D."/>
            <person name="Halldorsson B.V."/>
            <person name="Hannenhalli S."/>
            <person name="Turner R."/>
            <person name="Yooseph S."/>
            <person name="Lu F."/>
            <person name="Nusskern D.R."/>
            <person name="Shue B.C."/>
            <person name="Zheng X.H."/>
            <person name="Zhong F."/>
            <person name="Delcher A.L."/>
            <person name="Huson D.H."/>
            <person name="Kravitz S.A."/>
            <person name="Mouchard L."/>
            <person name="Reinert K."/>
            <person name="Remington K.A."/>
            <person name="Clark A.G."/>
            <person name="Waterman M.S."/>
            <person name="Eichler E.E."/>
            <person name="Adams M.D."/>
            <person name="Hunkapiller M.W."/>
            <person name="Myers E.W."/>
            <person name="Venter J.C."/>
        </authorList>
    </citation>
    <scope>NUCLEOTIDE SEQUENCE [LARGE SCALE GENOMIC DNA]</scope>
</reference>
<reference key="8">
    <citation type="journal article" date="2004" name="Genome Res.">
        <title>The status, quality, and expansion of the NIH full-length cDNA project: the Mammalian Gene Collection (MGC).</title>
        <authorList>
            <consortium name="The MGC Project Team"/>
        </authorList>
    </citation>
    <scope>NUCLEOTIDE SEQUENCE [LARGE SCALE MRNA]</scope>
    <source>
        <tissue>Leukocyte</tissue>
    </source>
</reference>
<reference key="9">
    <citation type="journal article" date="1986" name="Biochemistry">
        <title>Characterization of human platelet basic protein, a precursor form of low-affinity platelet factor 4 and beta-thromboglobulin.</title>
        <authorList>
            <person name="Holt J.C."/>
            <person name="Harris M.E."/>
            <person name="Holt A.M."/>
            <person name="Lange E."/>
            <person name="Henschen A."/>
            <person name="Niewiarowski S."/>
        </authorList>
    </citation>
    <scope>PROTEIN SEQUENCE OF 35-53</scope>
</reference>
<reference key="10">
    <citation type="journal article" date="2004" name="Protein Sci.">
        <title>Signal peptide prediction based on analysis of experimentally verified cleavage sites.</title>
        <authorList>
            <person name="Zhang Z."/>
            <person name="Henzel W.J."/>
        </authorList>
    </citation>
    <scope>PROTEIN SEQUENCE OF 35-49</scope>
</reference>
<reference key="11">
    <citation type="journal article" date="2000" name="J. Biol. Chem.">
        <title>Thrombocidins, microbicidal proteins from human blood platelets, are C-terminal deletion products of CXC chemokines.</title>
        <authorList>
            <person name="Krijgsveld J."/>
            <person name="Zaat S.A."/>
            <person name="Meeldijk J."/>
            <person name="van Veelen P.A."/>
            <person name="Fang G."/>
            <person name="Poolman B."/>
            <person name="Brandt E."/>
            <person name="Ehlert J.E."/>
            <person name="Kuijpers A.J."/>
            <person name="Engbers G.H."/>
            <person name="Feijen J."/>
            <person name="Dankert J."/>
        </authorList>
    </citation>
    <scope>PROTEIN SEQUENCE OF 44-126</scope>
    <scope>IDENTIFICATION OF TC-1 AND TC-2</scope>
    <scope>FUNCTION</scope>
</reference>
<reference key="12">
    <citation type="journal article" date="1983" name="Proc. Natl. Acad. Sci. U.S.A.">
        <title>Structural and biological characteristics of connective tissue activating peptide (CTAP-III), a major human platelet-derived growth factor.</title>
        <authorList>
            <person name="Castor C.W."/>
            <person name="Miller J.W."/>
            <person name="Walz D.A."/>
        </authorList>
    </citation>
    <scope>PROTEIN SEQUENCE OF 44-66 AND 125-128</scope>
</reference>
<reference key="13">
    <citation type="journal article" date="2003" name="Nat. Biotechnol.">
        <title>Exploring proteomes and analyzing protein processing by mass spectrometric identification of sorted N-terminal peptides.</title>
        <authorList>
            <person name="Gevaert K."/>
            <person name="Goethals M."/>
            <person name="Martens L."/>
            <person name="Van Damme J."/>
            <person name="Staes A."/>
            <person name="Thomas G.R."/>
            <person name="Vandekerckhove J."/>
        </authorList>
    </citation>
    <scope>PROTEIN SEQUENCE OF 44-62</scope>
    <source>
        <tissue>Platelet</tissue>
    </source>
</reference>
<reference key="14">
    <citation type="journal article" date="1978" name="Biochemistry">
        <title>Complete covalent structure of human beta-thromboglobulin.</title>
        <authorList>
            <person name="Begg G.S."/>
            <person name="Pepper D.S."/>
            <person name="Chesterman C.N."/>
            <person name="Morgan F.J."/>
        </authorList>
    </citation>
    <scope>PROTEIN SEQUENCE OF 48-126</scope>
</reference>
<reference key="15">
    <citation type="journal article" date="1996" name="Thromb. Haemost.">
        <title>Thrombin-activated human platelets release two NAP-2 variants that stimulate polymorphonuclear leukocytes.</title>
        <authorList>
            <person name="Piccardoni P."/>
            <person name="Evangelista V."/>
            <person name="Piccoli A."/>
            <person name="de Gaetano G."/>
            <person name="Walz A."/>
            <person name="Cerletti C."/>
        </authorList>
    </citation>
    <scope>PROTEIN SEQUENCE OF 55-128</scope>
    <scope>IDENTIFICATION OF NAP-2(73) AND NAP-2(74)</scope>
    <scope>FUNCTION</scope>
    <source>
        <tissue>Platelet</tissue>
    </source>
</reference>
<reference key="16">
    <citation type="journal article" date="1989" name="Biochem. Biophys. Res. Commun.">
        <title>Connective tissue activation. XXXIII. Biologically active cleavage products of CTAP-III from human platelets.</title>
        <authorList>
            <person name="Castor C.W."/>
            <person name="Walz D.A."/>
            <person name="Ragsdale C.G."/>
            <person name="Hossler P.A."/>
            <person name="Smith E.M."/>
            <person name="Bignall M.C."/>
            <person name="Aaron B.P."/>
            <person name="Mountjoy K."/>
        </authorList>
    </citation>
    <scope>PROTEIN SEQUENCE OF 57-68</scope>
</reference>
<reference key="17">
    <citation type="journal article" date="1989" name="Biochem. Biophys. Res. Commun.">
        <title>A novel cleavage product of beta-thromboglobulin formed in cultures of stimulated mononuclear cells activates human neutrophils.</title>
        <authorList>
            <person name="Walz A."/>
            <person name="Baggiolini M."/>
        </authorList>
    </citation>
    <scope>PROTEIN SEQUENCE OF 59-126</scope>
</reference>
<reference key="18">
    <citation type="journal article" date="1995" name="J. Biol. Chem.">
        <title>Limited and defined truncation at the C-terminus enhances receptor binding and degranulation activity of the neutrophil-activating peptide 2 (NAP-2). Comparison of native and recombinant NAP-2 variants.</title>
        <authorList>
            <person name="Ehlert J.E."/>
            <person name="Petersen F."/>
            <person name="Kubbutat M.H."/>
            <person name="Gerdes J."/>
            <person name="Flad H.D."/>
            <person name="Brandt E."/>
        </authorList>
    </citation>
    <scope>PROTEIN SEQUENCE OF 59-124</scope>
    <scope>IDENTIFICATION OF NAP-2(1-66)</scope>
    <scope>FUNCTION</scope>
    <source>
        <tissue>Peripheral blood monocyte</tissue>
    </source>
</reference>
<reference key="19">
    <citation type="journal article" date="1990" name="J. Exp. Med.">
        <title>Generation of the neutrophil-activating peptide NAP-2 from platelet basic protein or connective tissue-activating peptide III through monocyte proteases.</title>
        <authorList>
            <person name="Walz A."/>
            <person name="Baggiolini M."/>
        </authorList>
    </citation>
    <scope>PROTEIN SEQUENCE OF 59-67</scope>
</reference>
<reference key="20">
    <citation type="journal article" date="1991" name="Biochemistry">
        <title>Chemical synthesis, purification, and characterization of two inflammatory proteins, neutrophil activating peptide 1 (interleukin-8) and neutrophil activating peptide.</title>
        <authorList>
            <person name="Clark-Lewis I."/>
            <person name="Mose B."/>
            <person name="Walz A."/>
            <person name="Baggiolini M."/>
            <person name="Scott G.J."/>
            <person name="Aebersold R."/>
        </authorList>
    </citation>
    <scope>SYNTHESIS OF 59-126</scope>
</reference>
<reference key="21">
    <citation type="journal article" date="1998" name="J. Immunol.">
        <title>Novel C-terminally truncated isoforms of the CXC chemokine beta-thromboglobulin and their impact on neutrophil functions.</title>
        <authorList>
            <person name="Ehlert J.E."/>
            <person name="Gerdes J."/>
            <person name="Flad H.-D."/>
            <person name="Brandt E."/>
        </authorList>
    </citation>
    <scope>IDENTIFICATION OF CTAP-III(1-81) AND NAP-2(1-63)</scope>
    <scope>FUNCTION</scope>
    <scope>PROTEOLYTIC PROCESSING OF C-TERMINAL</scope>
</reference>
<reference key="22">
    <citation type="journal article" date="2014" name="J. Proteomics">
        <title>An enzyme assisted RP-RPLC approach for in-depth analysis of human liver phosphoproteome.</title>
        <authorList>
            <person name="Bian Y."/>
            <person name="Song C."/>
            <person name="Cheng K."/>
            <person name="Dong M."/>
            <person name="Wang F."/>
            <person name="Huang J."/>
            <person name="Sun D."/>
            <person name="Wang L."/>
            <person name="Ye M."/>
            <person name="Zou H."/>
        </authorList>
    </citation>
    <scope>IDENTIFICATION BY MASS SPECTROMETRY [LARGE SCALE ANALYSIS]</scope>
    <source>
        <tissue>Liver</tissue>
    </source>
</reference>
<reference key="23">
    <citation type="journal article" date="1994" name="FEBS Lett.">
        <title>Purification, crystallization and preliminary X-ray diffraction analysis of recombinant human neutrophil-activating peptide 2 (rhNAP-2).</title>
        <authorList>
            <person name="Kungl A.J."/>
            <person name="Machius M."/>
            <person name="Huber R."/>
            <person name="Schwer C."/>
            <person name="Lam C."/>
            <person name="Aschauer H."/>
            <person name="Ehn G."/>
            <person name="Lindley I.J.D."/>
            <person name="Auer M."/>
        </authorList>
    </citation>
    <scope>X-RAY CRYSTALLOGRAPHY (2.0 ANGSTROMS) OF 59-128</scope>
</reference>
<reference key="24">
    <citation type="journal article" date="1995" name="J. Biol. Chem.">
        <title>The crystal structure of recombinant human neutrophil-activating peptide-2 (M6L) at 1.9-A resolution.</title>
        <authorList>
            <person name="Malkowski M.G."/>
            <person name="Wu J.Y."/>
            <person name="Lazar J.B."/>
            <person name="Johnson P.H."/>
            <person name="Edwards B.F.P."/>
        </authorList>
    </citation>
    <scope>X-RAY CRYSTALLOGRAPHY (1.9 ANGSTROMS) OF 59-128</scope>
</reference>
<dbReference type="EMBL" id="M54995">
    <property type="protein sequence ID" value="AAA62836.1"/>
    <property type="molecule type" value="mRNA"/>
</dbReference>
<dbReference type="EMBL" id="AF349466">
    <property type="protein sequence ID" value="AAK29642.1"/>
    <property type="molecule type" value="Genomic_DNA"/>
</dbReference>
<dbReference type="EMBL" id="CR456805">
    <property type="protein sequence ID" value="CAG33086.1"/>
    <property type="molecule type" value="mRNA"/>
</dbReference>
<dbReference type="EMBL" id="AC097709">
    <property type="protein sequence ID" value="AAY41004.1"/>
    <property type="molecule type" value="Genomic_DNA"/>
</dbReference>
<dbReference type="EMBL" id="AK312166">
    <property type="protein sequence ID" value="BAG35100.1"/>
    <property type="molecule type" value="mRNA"/>
</dbReference>
<dbReference type="EMBL" id="CH471057">
    <property type="protein sequence ID" value="EAX05695.1"/>
    <property type="molecule type" value="Genomic_DNA"/>
</dbReference>
<dbReference type="EMBL" id="BC028217">
    <property type="protein sequence ID" value="AAH28217.1"/>
    <property type="molecule type" value="mRNA"/>
</dbReference>
<dbReference type="CCDS" id="CCDS3563.1"/>
<dbReference type="PIR" id="A39546">
    <property type="entry name" value="TGHU"/>
</dbReference>
<dbReference type="RefSeq" id="NP_002695.1">
    <property type="nucleotide sequence ID" value="NM_002704.3"/>
</dbReference>
<dbReference type="PDB" id="1F9P">
    <property type="method" value="X-ray"/>
    <property type="resolution" value="1.93 A"/>
    <property type="chains" value="A=44-128"/>
</dbReference>
<dbReference type="PDB" id="1NAP">
    <property type="method" value="X-ray"/>
    <property type="resolution" value="1.90 A"/>
    <property type="chains" value="A/B/C/D=59-128"/>
</dbReference>
<dbReference type="PDB" id="1TVX">
    <property type="method" value="X-ray"/>
    <property type="resolution" value="1.75 A"/>
    <property type="chains" value="A/B/C/D=54-128"/>
</dbReference>
<dbReference type="PDBsum" id="1F9P"/>
<dbReference type="PDBsum" id="1NAP"/>
<dbReference type="PDBsum" id="1TVX"/>
<dbReference type="SMR" id="P02775"/>
<dbReference type="BioGRID" id="111469">
    <property type="interactions" value="27"/>
</dbReference>
<dbReference type="DIP" id="DIP-5913N"/>
<dbReference type="FunCoup" id="P02775">
    <property type="interactions" value="734"/>
</dbReference>
<dbReference type="IntAct" id="P02775">
    <property type="interactions" value="35"/>
</dbReference>
<dbReference type="MINT" id="P02775"/>
<dbReference type="STRING" id="9606.ENSP00000296028"/>
<dbReference type="DrugBank" id="DB09130">
    <property type="generic name" value="Copper"/>
</dbReference>
<dbReference type="DrugBank" id="DB03635">
    <property type="generic name" value="Ethanesulfonic acid"/>
</dbReference>
<dbReference type="iPTMnet" id="P02775"/>
<dbReference type="PhosphoSitePlus" id="P02775"/>
<dbReference type="BioMuta" id="PPBP"/>
<dbReference type="DMDM" id="129874"/>
<dbReference type="jPOST" id="P02775"/>
<dbReference type="MassIVE" id="P02775"/>
<dbReference type="PaxDb" id="9606-ENSP00000296028"/>
<dbReference type="PeptideAtlas" id="P02775"/>
<dbReference type="ProteomicsDB" id="51592"/>
<dbReference type="TopDownProteomics" id="P02775"/>
<dbReference type="Antibodypedia" id="1902">
    <property type="antibodies" value="654 antibodies from 37 providers"/>
</dbReference>
<dbReference type="DNASU" id="5473"/>
<dbReference type="Ensembl" id="ENST00000296028.4">
    <property type="protein sequence ID" value="ENSP00000296028.3"/>
    <property type="gene ID" value="ENSG00000163736.5"/>
</dbReference>
<dbReference type="Ensembl" id="ENST00000716905.1">
    <property type="protein sequence ID" value="ENSP00000520613.1"/>
    <property type="gene ID" value="ENSG00000163736.5"/>
</dbReference>
<dbReference type="GeneID" id="5473"/>
<dbReference type="KEGG" id="hsa:5473"/>
<dbReference type="MANE-Select" id="ENST00000296028.4">
    <property type="protein sequence ID" value="ENSP00000296028.3"/>
    <property type="RefSeq nucleotide sequence ID" value="NM_002704.3"/>
    <property type="RefSeq protein sequence ID" value="NP_002695.1"/>
</dbReference>
<dbReference type="UCSC" id="uc003hhj.4">
    <property type="organism name" value="human"/>
</dbReference>
<dbReference type="AGR" id="HGNC:9240"/>
<dbReference type="CTD" id="5473"/>
<dbReference type="DisGeNET" id="5473"/>
<dbReference type="GeneCards" id="PPBP"/>
<dbReference type="HGNC" id="HGNC:9240">
    <property type="gene designation" value="PPBP"/>
</dbReference>
<dbReference type="HPA" id="ENSG00000163736">
    <property type="expression patterns" value="Tissue enhanced (bone marrow, lymphoid tissue)"/>
</dbReference>
<dbReference type="MIM" id="121010">
    <property type="type" value="gene"/>
</dbReference>
<dbReference type="neXtProt" id="NX_P02775"/>
<dbReference type="OpenTargets" id="ENSG00000163736"/>
<dbReference type="PharmGKB" id="PA33561"/>
<dbReference type="VEuPathDB" id="HostDB:ENSG00000163736"/>
<dbReference type="eggNOG" id="ENOG502S7MM">
    <property type="taxonomic scope" value="Eukaryota"/>
</dbReference>
<dbReference type="GeneTree" id="ENSGT00940000162559"/>
<dbReference type="HOGENOM" id="CLU_143902_1_1_1"/>
<dbReference type="InParanoid" id="P02775"/>
<dbReference type="OMA" id="FVELYCM"/>
<dbReference type="OrthoDB" id="8872899at2759"/>
<dbReference type="PAN-GO" id="P02775">
    <property type="GO annotations" value="8 GO annotations based on evolutionary models"/>
</dbReference>
<dbReference type="PhylomeDB" id="P02775"/>
<dbReference type="TreeFam" id="TF333433"/>
<dbReference type="PathwayCommons" id="P02775"/>
<dbReference type="Reactome" id="R-HSA-114608">
    <property type="pathway name" value="Platelet degranulation"/>
</dbReference>
<dbReference type="Reactome" id="R-HSA-380108">
    <property type="pathway name" value="Chemokine receptors bind chemokines"/>
</dbReference>
<dbReference type="Reactome" id="R-HSA-418594">
    <property type="pathway name" value="G alpha (i) signalling events"/>
</dbReference>
<dbReference type="Reactome" id="R-HSA-6798695">
    <property type="pathway name" value="Neutrophil degranulation"/>
</dbReference>
<dbReference type="SignaLink" id="P02775"/>
<dbReference type="SIGNOR" id="P02775"/>
<dbReference type="BioGRID-ORCS" id="5473">
    <property type="hits" value="12 hits in 1144 CRISPR screens"/>
</dbReference>
<dbReference type="EvolutionaryTrace" id="P02775"/>
<dbReference type="GeneWiki" id="CXCL7"/>
<dbReference type="GenomeRNAi" id="5473"/>
<dbReference type="Pharos" id="P02775">
    <property type="development level" value="Tbio"/>
</dbReference>
<dbReference type="PRO" id="PR:P02775"/>
<dbReference type="Proteomes" id="UP000005640">
    <property type="component" value="Chromosome 4"/>
</dbReference>
<dbReference type="RNAct" id="P02775">
    <property type="molecule type" value="protein"/>
</dbReference>
<dbReference type="Bgee" id="ENSG00000163736">
    <property type="expression patterns" value="Expressed in monocyte and 128 other cell types or tissues"/>
</dbReference>
<dbReference type="GO" id="GO:0005576">
    <property type="term" value="C:extracellular region"/>
    <property type="evidence" value="ECO:0000304"/>
    <property type="project" value="Reactome"/>
</dbReference>
<dbReference type="GO" id="GO:0005615">
    <property type="term" value="C:extracellular space"/>
    <property type="evidence" value="ECO:0000318"/>
    <property type="project" value="GO_Central"/>
</dbReference>
<dbReference type="GO" id="GO:0031093">
    <property type="term" value="C:platelet alpha granule lumen"/>
    <property type="evidence" value="ECO:0000304"/>
    <property type="project" value="Reactome"/>
</dbReference>
<dbReference type="GO" id="GO:1904724">
    <property type="term" value="C:tertiary granule lumen"/>
    <property type="evidence" value="ECO:0000304"/>
    <property type="project" value="Reactome"/>
</dbReference>
<dbReference type="GO" id="GO:0008009">
    <property type="term" value="F:chemokine activity"/>
    <property type="evidence" value="ECO:0000318"/>
    <property type="project" value="GO_Central"/>
</dbReference>
<dbReference type="GO" id="GO:0045236">
    <property type="term" value="F:CXCR chemokine receptor binding"/>
    <property type="evidence" value="ECO:0000318"/>
    <property type="project" value="GO_Central"/>
</dbReference>
<dbReference type="GO" id="GO:0055056">
    <property type="term" value="F:D-glucose transmembrane transporter activity"/>
    <property type="evidence" value="ECO:0000304"/>
    <property type="project" value="ProtInc"/>
</dbReference>
<dbReference type="GO" id="GO:0008083">
    <property type="term" value="F:growth factor activity"/>
    <property type="evidence" value="ECO:0007669"/>
    <property type="project" value="UniProtKB-KW"/>
</dbReference>
<dbReference type="GO" id="GO:0061844">
    <property type="term" value="P:antimicrobial humoral immune response mediated by antimicrobial peptide"/>
    <property type="evidence" value="ECO:0000318"/>
    <property type="project" value="GO_Central"/>
</dbReference>
<dbReference type="GO" id="GO:0071222">
    <property type="term" value="P:cellular response to lipopolysaccharide"/>
    <property type="evidence" value="ECO:0000318"/>
    <property type="project" value="GO_Central"/>
</dbReference>
<dbReference type="GO" id="GO:1904659">
    <property type="term" value="P:D-glucose transmembrane transport"/>
    <property type="evidence" value="ECO:0000304"/>
    <property type="project" value="ProtInc"/>
</dbReference>
<dbReference type="GO" id="GO:0042742">
    <property type="term" value="P:defense response to bacterium"/>
    <property type="evidence" value="ECO:0007669"/>
    <property type="project" value="UniProtKB-KW"/>
</dbReference>
<dbReference type="GO" id="GO:0006954">
    <property type="term" value="P:inflammatory response"/>
    <property type="evidence" value="ECO:0000318"/>
    <property type="project" value="GO_Central"/>
</dbReference>
<dbReference type="GO" id="GO:0030593">
    <property type="term" value="P:neutrophil chemotaxis"/>
    <property type="evidence" value="ECO:0000318"/>
    <property type="project" value="GO_Central"/>
</dbReference>
<dbReference type="GO" id="GO:0051781">
    <property type="term" value="P:positive regulation of cell division"/>
    <property type="evidence" value="ECO:0007669"/>
    <property type="project" value="UniProtKB-KW"/>
</dbReference>
<dbReference type="CDD" id="cd00273">
    <property type="entry name" value="Chemokine_CXC"/>
    <property type="match status" value="1"/>
</dbReference>
<dbReference type="FunFam" id="2.40.50.40:FF:000004">
    <property type="entry name" value="C-X-C motif chemokine"/>
    <property type="match status" value="1"/>
</dbReference>
<dbReference type="Gene3D" id="2.40.50.40">
    <property type="match status" value="1"/>
</dbReference>
<dbReference type="InterPro" id="IPR039809">
    <property type="entry name" value="Chemokine_b/g/d"/>
</dbReference>
<dbReference type="InterPro" id="IPR001089">
    <property type="entry name" value="Chemokine_CXC"/>
</dbReference>
<dbReference type="InterPro" id="IPR018048">
    <property type="entry name" value="Chemokine_CXC_CS"/>
</dbReference>
<dbReference type="InterPro" id="IPR001811">
    <property type="entry name" value="Chemokine_IL8-like_dom"/>
</dbReference>
<dbReference type="InterPro" id="IPR033899">
    <property type="entry name" value="CXC_Chemokine_domain"/>
</dbReference>
<dbReference type="InterPro" id="IPR036048">
    <property type="entry name" value="Interleukin_8-like_sf"/>
</dbReference>
<dbReference type="PANTHER" id="PTHR12015:SF198">
    <property type="entry name" value="PLATELET BASIC PROTEIN"/>
    <property type="match status" value="1"/>
</dbReference>
<dbReference type="PANTHER" id="PTHR12015">
    <property type="entry name" value="SMALL INDUCIBLE CYTOKINE A"/>
    <property type="match status" value="1"/>
</dbReference>
<dbReference type="Pfam" id="PF00048">
    <property type="entry name" value="IL8"/>
    <property type="match status" value="1"/>
</dbReference>
<dbReference type="PRINTS" id="PR00436">
    <property type="entry name" value="INTERLEUKIN8"/>
</dbReference>
<dbReference type="PRINTS" id="PR00437">
    <property type="entry name" value="SMALLCYTKCXC"/>
</dbReference>
<dbReference type="SMART" id="SM00199">
    <property type="entry name" value="SCY"/>
    <property type="match status" value="1"/>
</dbReference>
<dbReference type="SUPFAM" id="SSF54117">
    <property type="entry name" value="Interleukin 8-like chemokines"/>
    <property type="match status" value="1"/>
</dbReference>
<dbReference type="PROSITE" id="PS00471">
    <property type="entry name" value="SMALL_CYTOKINES_CXC"/>
    <property type="match status" value="1"/>
</dbReference>
<protein>
    <recommendedName>
        <fullName>Platelet basic protein</fullName>
        <shortName>PBP</shortName>
    </recommendedName>
    <alternativeName>
        <fullName>C-X-C motif chemokine 7</fullName>
    </alternativeName>
    <alternativeName>
        <fullName>Leukocyte-derived growth factor</fullName>
        <shortName>LDGF</shortName>
    </alternativeName>
    <alternativeName>
        <fullName>Macrophage-derived growth factor</fullName>
        <shortName>MDGF</shortName>
    </alternativeName>
    <alternativeName>
        <fullName>Small-inducible cytokine B7</fullName>
    </alternativeName>
    <component>
        <recommendedName>
            <fullName>Connective tissue-activating peptide III</fullName>
            <shortName>CTAP-III</shortName>
        </recommendedName>
        <alternativeName>
            <fullName>LA-PF4</fullName>
        </alternativeName>
        <alternativeName>
            <fullName>Low-affinity platelet factor IV</fullName>
        </alternativeName>
    </component>
    <component>
        <recommendedName>
            <fullName>TC-2</fullName>
        </recommendedName>
    </component>
    <component>
        <recommendedName>
            <fullName>Connective tissue-activating peptide III(1-81)</fullName>
            <shortName>CTAP-III(1-81)</shortName>
        </recommendedName>
    </component>
    <component>
        <recommendedName>
            <fullName>Beta-thromboglobulin</fullName>
            <shortName>Beta-TG</shortName>
        </recommendedName>
    </component>
    <component>
        <recommendedName>
            <fullName>Neutrophil-activating peptide 2(74)</fullName>
            <shortName>NAP-2(74)</shortName>
        </recommendedName>
    </component>
    <component>
        <recommendedName>
            <fullName>Neutrophil-activating peptide 2(73)</fullName>
            <shortName>NAP-2(73)</shortName>
        </recommendedName>
    </component>
    <component>
        <recommendedName>
            <fullName>Neutrophil-activating peptide 2</fullName>
            <shortName>NAP-2</shortName>
        </recommendedName>
    </component>
    <component>
        <recommendedName>
            <fullName>TC-1</fullName>
        </recommendedName>
    </component>
    <component>
        <recommendedName>
            <fullName>Neutrophil-activating peptide 2(1-66)</fullName>
            <shortName>NAP-2(1-66)</shortName>
        </recommendedName>
    </component>
    <component>
        <recommendedName>
            <fullName>Neutrophil-activating peptide 2(1-63)</fullName>
            <shortName>NAP-2(1-63)</shortName>
        </recommendedName>
    </component>
</protein>
<comment type="function">
    <text evidence="1 4 5 6">LA-PF4 stimulates DNA synthesis, mitosis, glycolysis, intracellular cAMP accumulation, prostaglandin E2 secretion, and synthesis of hyaluronic acid and sulfated glycosaminoglycan. It also stimulates the formation and secretion of plasminogen activator by human synovial cells. NAP-2 is a ligand for CXCR1 and CXCR2, and NAP-2, NAP-2(73), NAP-2(74), NAP-2(1-66), and most potent NAP-2(1-63) are chemoattractants and activators for neutrophils. TC-1 and TC-2 are antibacterial proteins, in vitro released from activated platelet alpha-granules. CTAP-III(1-81) is more potent than CTAP-III desensitize chemokine-induced neutrophil activation.</text>
</comment>
<comment type="subunit">
    <text>Beta-thromboglobulin is a homotetramer.</text>
</comment>
<comment type="interaction">
    <interactant intactId="EBI-718973">
        <id>P02775</id>
    </interactant>
    <interactant intactId="EBI-6624398">
        <id>P06307</id>
        <label>CCK</label>
    </interactant>
    <organismsDiffer>false</organismsDiffer>
    <experiments>3</experiments>
</comment>
<comment type="interaction">
    <interactant intactId="EBI-718973">
        <id>P02775</id>
    </interactant>
    <interactant intactId="EBI-2848366">
        <id>P13501</id>
        <label>CCL5</label>
    </interactant>
    <organismsDiffer>false</organismsDiffer>
    <experiments>2</experiments>
</comment>
<comment type="interaction">
    <interactant intactId="EBI-718973">
        <id>P02775</id>
    </interactant>
    <interactant intactId="EBI-3911467">
        <id>Q07325</id>
        <label>CXCL9</label>
    </interactant>
    <organismsDiffer>false</organismsDiffer>
    <experiments>2</experiments>
</comment>
<comment type="interaction">
    <interactant intactId="EBI-718973">
        <id>P02775</id>
    </interactant>
    <interactant intactId="EBI-5280197">
        <id>O75400-2</id>
        <label>PRPF40A</label>
    </interactant>
    <organismsDiffer>false</organismsDiffer>
    <experiments>3</experiments>
</comment>
<comment type="interaction">
    <interactant intactId="EBI-718973">
        <id>P02775</id>
    </interactant>
    <interactant intactId="EBI-2623095">
        <id>Q9Y371</id>
        <label>SH3GLB1</label>
    </interactant>
    <organismsDiffer>false</organismsDiffer>
    <experiments>3</experiments>
</comment>
<comment type="subcellular location">
    <subcellularLocation>
        <location>Secreted</location>
    </subcellularLocation>
</comment>
<comment type="PTM">
    <text>Proteolytic removal of residues 1-9 produces the active peptide connective tissue-activating peptide III (CTAP-III) (low-affinity platelet factor IV (LA-PF4)).</text>
</comment>
<comment type="PTM">
    <text>Proteolytic removal of residues 1-13 produces the active peptide beta-thromboglobulin, which is released from platelets along with platelet factor 4 and platelet-derived growth factor.</text>
</comment>
<comment type="PTM">
    <text evidence="6">NAP-2(1-66) is produced by proteolytical processing, probably after secretion by leukocytes other than neutrophils.</text>
</comment>
<comment type="PTM">
    <text evidence="6">NAP-2(73) and NAP-2(74) seem not be produced by proteolytical processing of secreted precursors but are released in an active form from platelets.</text>
</comment>
<comment type="similarity">
    <text evidence="7">Belongs to the intercrine alpha (chemokine CxC) family.</text>
</comment>
<comment type="online information" name="Wikipedia">
    <link uri="https://en.wikipedia.org/wiki/CXCL7"/>
    <text>CXCL7 entry</text>
</comment>